<evidence type="ECO:0000255" key="1">
    <source>
        <dbReference type="PROSITE-ProRule" id="PRU00400"/>
    </source>
</evidence>
<evidence type="ECO:0000256" key="2">
    <source>
        <dbReference type="SAM" id="MobiDB-lite"/>
    </source>
</evidence>
<evidence type="ECO:0000269" key="3">
    <source>
    </source>
</evidence>
<evidence type="ECO:0000269" key="4">
    <source>
    </source>
</evidence>
<evidence type="ECO:0000269" key="5">
    <source>
    </source>
</evidence>
<evidence type="ECO:0000269" key="6">
    <source>
    </source>
</evidence>
<evidence type="ECO:0000269" key="7">
    <source>
    </source>
</evidence>
<evidence type="ECO:0000303" key="8">
    <source>
    </source>
</evidence>
<evidence type="ECO:0000303" key="9">
    <source>
    </source>
</evidence>
<evidence type="ECO:0000305" key="10"/>
<evidence type="ECO:0007744" key="11">
    <source>
    </source>
</evidence>
<evidence type="ECO:0007744" key="12">
    <source>
    </source>
</evidence>
<evidence type="ECO:0007829" key="13">
    <source>
        <dbReference type="PDB" id="2E63"/>
    </source>
</evidence>
<feature type="chain" id="PRO_0000299105" description="Neuralized-like protein 4">
    <location>
        <begin position="1"/>
        <end position="1562"/>
    </location>
</feature>
<feature type="domain" description="NHR 1" evidence="1">
    <location>
        <begin position="41"/>
        <end position="207"/>
    </location>
</feature>
<feature type="domain" description="NHR 2" evidence="1">
    <location>
        <begin position="317"/>
        <end position="484"/>
    </location>
</feature>
<feature type="domain" description="NHR 3" evidence="1">
    <location>
        <begin position="520"/>
        <end position="686"/>
    </location>
</feature>
<feature type="domain" description="NHR 4" evidence="1">
    <location>
        <begin position="716"/>
        <end position="884"/>
    </location>
</feature>
<feature type="domain" description="NHR 5" evidence="1">
    <location>
        <begin position="913"/>
        <end position="1086"/>
    </location>
</feature>
<feature type="domain" description="NHR 6" evidence="1">
    <location>
        <begin position="1131"/>
        <end position="1294"/>
    </location>
</feature>
<feature type="region of interest" description="Disordered" evidence="2">
    <location>
        <begin position="1"/>
        <end position="48"/>
    </location>
</feature>
<feature type="region of interest" description="Disordered" evidence="2">
    <location>
        <begin position="207"/>
        <end position="236"/>
    </location>
</feature>
<feature type="region of interest" description="Disordered" evidence="2">
    <location>
        <begin position="691"/>
        <end position="716"/>
    </location>
</feature>
<feature type="region of interest" description="Disordered" evidence="2">
    <location>
        <begin position="1086"/>
        <end position="1123"/>
    </location>
</feature>
<feature type="compositionally biased region" description="Gly residues" evidence="2">
    <location>
        <begin position="1"/>
        <end position="42"/>
    </location>
</feature>
<feature type="compositionally biased region" description="Pro residues" evidence="2">
    <location>
        <begin position="207"/>
        <end position="224"/>
    </location>
</feature>
<feature type="compositionally biased region" description="Acidic residues" evidence="2">
    <location>
        <begin position="1106"/>
        <end position="1115"/>
    </location>
</feature>
<feature type="modified residue" description="Phosphoserine" evidence="12">
    <location>
        <position position="502"/>
    </location>
</feature>
<feature type="modified residue" description="Phosphoserine" evidence="11">
    <location>
        <position position="907"/>
    </location>
</feature>
<feature type="splice variant" id="VSP_027563" description="In isoform 2." evidence="8 9">
    <location>
        <begin position="863"/>
        <end position="864"/>
    </location>
</feature>
<feature type="sequence variant" id="VAR_049527" description="In dbSNP:rs3809813." evidence="4">
    <original>Q</original>
    <variation>H</variation>
    <location>
        <position position="1019"/>
    </location>
</feature>
<feature type="sequence conflict" description="In Ref. 2; CAB66804." evidence="10" ref="2">
    <original>T</original>
    <variation>S</variation>
    <location>
        <position position="228"/>
    </location>
</feature>
<feature type="sequence conflict" description="In Ref. 2; CAB66804." evidence="10" ref="2">
    <original>D</original>
    <variation>G</variation>
    <location>
        <position position="359"/>
    </location>
</feature>
<feature type="sequence conflict" description="In Ref. 2; CAB66804." evidence="10" ref="2">
    <original>T</original>
    <variation>A</variation>
    <location>
        <position position="637"/>
    </location>
</feature>
<feature type="sequence conflict" description="In Ref. 3; AAH07227." evidence="10" ref="3">
    <original>G</original>
    <variation>A</variation>
    <location>
        <position position="1262"/>
    </location>
</feature>
<feature type="strand" evidence="13">
    <location>
        <begin position="50"/>
        <end position="54"/>
    </location>
</feature>
<feature type="strand" evidence="13">
    <location>
        <begin position="56"/>
        <end position="58"/>
    </location>
</feature>
<feature type="strand" evidence="13">
    <location>
        <begin position="60"/>
        <end position="64"/>
    </location>
</feature>
<feature type="turn" evidence="13">
    <location>
        <begin position="66"/>
        <end position="68"/>
    </location>
</feature>
<feature type="strand" evidence="13">
    <location>
        <begin position="86"/>
        <end position="94"/>
    </location>
</feature>
<feature type="strand" evidence="13">
    <location>
        <begin position="103"/>
        <end position="109"/>
    </location>
</feature>
<feature type="helix" evidence="13">
    <location>
        <begin position="120"/>
        <end position="122"/>
    </location>
</feature>
<feature type="strand" evidence="13">
    <location>
        <begin position="125"/>
        <end position="139"/>
    </location>
</feature>
<feature type="strand" evidence="13">
    <location>
        <begin position="141"/>
        <end position="145"/>
    </location>
</feature>
<feature type="helix" evidence="13">
    <location>
        <begin position="150"/>
        <end position="152"/>
    </location>
</feature>
<feature type="strand" evidence="13">
    <location>
        <begin position="159"/>
        <end position="163"/>
    </location>
</feature>
<feature type="strand" evidence="13">
    <location>
        <begin position="169"/>
        <end position="175"/>
    </location>
</feature>
<feature type="strand" evidence="13">
    <location>
        <begin position="177"/>
        <end position="182"/>
    </location>
</feature>
<feature type="strand" evidence="13">
    <location>
        <begin position="189"/>
        <end position="194"/>
    </location>
</feature>
<feature type="strand" evidence="13">
    <location>
        <begin position="199"/>
        <end position="204"/>
    </location>
</feature>
<proteinExistence type="evidence at protein level"/>
<organism>
    <name type="scientific">Homo sapiens</name>
    <name type="common">Human</name>
    <dbReference type="NCBI Taxonomy" id="9606"/>
    <lineage>
        <taxon>Eukaryota</taxon>
        <taxon>Metazoa</taxon>
        <taxon>Chordata</taxon>
        <taxon>Craniata</taxon>
        <taxon>Vertebrata</taxon>
        <taxon>Euteleostomi</taxon>
        <taxon>Mammalia</taxon>
        <taxon>Eutheria</taxon>
        <taxon>Euarchontoglires</taxon>
        <taxon>Primates</taxon>
        <taxon>Haplorrhini</taxon>
        <taxon>Catarrhini</taxon>
        <taxon>Hominidae</taxon>
        <taxon>Homo</taxon>
    </lineage>
</organism>
<reference key="1">
    <citation type="journal article" date="2001" name="DNA Res.">
        <title>Prediction of the coding sequences of unidentified human genes. XX. The complete sequences of 100 new cDNA clones from brain which code for large proteins in vitro.</title>
        <authorList>
            <person name="Nagase T."/>
            <person name="Nakayama M."/>
            <person name="Nakajima D."/>
            <person name="Kikuno R."/>
            <person name="Ohara O."/>
        </authorList>
    </citation>
    <scope>NUCLEOTIDE SEQUENCE [LARGE SCALE MRNA] (ISOFORM 1)</scope>
    <scope>TISSUE SPECIFICITY</scope>
    <source>
        <tissue>Brain</tissue>
    </source>
</reference>
<reference key="2">
    <citation type="journal article" date="2001" name="Genome Res.">
        <title>Towards a catalog of human genes and proteins: sequencing and analysis of 500 novel complete protein coding human cDNAs.</title>
        <authorList>
            <person name="Wiemann S."/>
            <person name="Weil B."/>
            <person name="Wellenreuther R."/>
            <person name="Gassenhuber J."/>
            <person name="Glassl S."/>
            <person name="Ansorge W."/>
            <person name="Boecher M."/>
            <person name="Bloecker H."/>
            <person name="Bauersachs S."/>
            <person name="Blum H."/>
            <person name="Lauber J."/>
            <person name="Duesterhoeft A."/>
            <person name="Beyer A."/>
            <person name="Koehrer K."/>
            <person name="Strack N."/>
            <person name="Mewes H.-W."/>
            <person name="Ottenwaelder B."/>
            <person name="Obermaier B."/>
            <person name="Tampe J."/>
            <person name="Heubner D."/>
            <person name="Wambutt R."/>
            <person name="Korn B."/>
            <person name="Klein M."/>
            <person name="Poustka A."/>
        </authorList>
    </citation>
    <scope>NUCLEOTIDE SEQUENCE [LARGE SCALE MRNA] OF 47-1562 (ISOFORM 2)</scope>
</reference>
<reference key="3">
    <citation type="journal article" date="2004" name="Genome Res.">
        <title>The status, quality, and expansion of the NIH full-length cDNA project: the Mammalian Gene Collection (MGC).</title>
        <authorList>
            <consortium name="The MGC Project Team"/>
        </authorList>
    </citation>
    <scope>NUCLEOTIDE SEQUENCE [LARGE SCALE MRNA] OF 735-1562 (ISOFORM 2)</scope>
    <scope>VARIANT HIS-1019</scope>
    <source>
        <tissue>Kidney</tissue>
        <tissue>Testis</tissue>
    </source>
</reference>
<reference key="4">
    <citation type="journal article" date="2008" name="Proc. Natl. Acad. Sci. U.S.A.">
        <title>A quantitative atlas of mitotic phosphorylation.</title>
        <authorList>
            <person name="Dephoure N."/>
            <person name="Zhou C."/>
            <person name="Villen J."/>
            <person name="Beausoleil S.A."/>
            <person name="Bakalarski C.E."/>
            <person name="Elledge S.J."/>
            <person name="Gygi S.P."/>
        </authorList>
    </citation>
    <scope>PHOSPHORYLATION [LARGE SCALE ANALYSIS] AT SER-907</scope>
    <scope>IDENTIFICATION BY MASS SPECTROMETRY [LARGE SCALE ANALYSIS]</scope>
    <source>
        <tissue>Cervix carcinoma</tissue>
    </source>
</reference>
<reference key="5">
    <citation type="journal article" date="2011" name="BMC Syst. Biol.">
        <title>Initial characterization of the human central proteome.</title>
        <authorList>
            <person name="Burkard T.R."/>
            <person name="Planyavsky M."/>
            <person name="Kaupe I."/>
            <person name="Breitwieser F.P."/>
            <person name="Buerckstuemmer T."/>
            <person name="Bennett K.L."/>
            <person name="Superti-Furga G."/>
            <person name="Colinge J."/>
        </authorList>
    </citation>
    <scope>IDENTIFICATION BY MASS SPECTROMETRY [LARGE SCALE ANALYSIS]</scope>
</reference>
<reference key="6">
    <citation type="journal article" date="2012" name="EMBO Rep.">
        <title>Neurl4, a novel daughter centriole protein, prevents formation of ectopic microtubule organizing centres.</title>
        <authorList>
            <person name="Li J."/>
            <person name="Kim S."/>
            <person name="Kobayashi T."/>
            <person name="Liang F.X."/>
            <person name="Korzeniewski N."/>
            <person name="Duensing S."/>
            <person name="Dynlacht B.D."/>
        </authorList>
    </citation>
    <scope>FUNCTION</scope>
    <scope>INTERACTION WITH CCP110</scope>
    <scope>SUBCELLULAR LOCATION</scope>
</reference>
<reference key="7">
    <citation type="journal article" date="2012" name="Mol. Cell. Biol.">
        <title>Identification and proteomic analysis of distinct UBE3A/E6AP protein complexes.</title>
        <authorList>
            <person name="Martinez-Noel G."/>
            <person name="Galligan J.T."/>
            <person name="Sowa M.E."/>
            <person name="Arndt V."/>
            <person name="Overton T.M."/>
            <person name="Harper J.W."/>
            <person name="Howley P.M."/>
        </authorList>
    </citation>
    <scope>INTERACTION WITH UBE3A AND MAPK6</scope>
</reference>
<reference key="8">
    <citation type="journal article" date="2012" name="Mol. Cell. Proteomics">
        <title>Interaction proteomics identify NEURL4 and the HECT E3 ligase HERC2 as novel modulators of centrosome architecture.</title>
        <authorList>
            <person name="Al-Hakim A.K."/>
            <person name="Bashkurov M."/>
            <person name="Gingras A.C."/>
            <person name="Durocher D."/>
            <person name="Pelletier L."/>
        </authorList>
    </citation>
    <scope>FUNCTION</scope>
    <scope>INTERACTION WITH CEP97; CCP110 AND HERC2</scope>
    <scope>SUBCELLULAR LOCATION</scope>
    <scope>UBIQUITINATION</scope>
</reference>
<reference key="9">
    <citation type="journal article" date="2013" name="J. Proteome Res.">
        <title>Toward a comprehensive characterization of a human cancer cell phosphoproteome.</title>
        <authorList>
            <person name="Zhou H."/>
            <person name="Di Palma S."/>
            <person name="Preisinger C."/>
            <person name="Peng M."/>
            <person name="Polat A.N."/>
            <person name="Heck A.J."/>
            <person name="Mohammed S."/>
        </authorList>
    </citation>
    <scope>PHOSPHORYLATION [LARGE SCALE ANALYSIS] AT SER-502</scope>
    <scope>IDENTIFICATION BY MASS SPECTROMETRY [LARGE SCALE ANALYSIS]</scope>
    <source>
        <tissue>Cervix carcinoma</tissue>
        <tissue>Erythroleukemia</tissue>
    </source>
</reference>
<reference key="10">
    <citation type="submission" date="2007-06" db="PDB data bank">
        <title>Solution structure of the NEUZ domain in KIAA1787 protein.</title>
        <authorList>
            <consortium name="RIKEN structural genomics initiative (RSGI)"/>
        </authorList>
    </citation>
    <scope>STRUCTURE BY NMR OF 42-205</scope>
</reference>
<comment type="function">
    <text evidence="5 6">Promotes CCP110 ubiquitination and proteasome-dependent degradation. By counteracting accumulation of CP110, maintains normal centriolar homeostasis and preventing formation of ectopic microtubular organizing centers.</text>
</comment>
<comment type="subunit">
    <text evidence="5 6 7">Interacts with CCP110; this interaction propmotes CCP110 ubiquitination and degradation via the proteasome pathway. Via its interaction with CCP110, may indirectly interact with CEP97. Interacts with the E3 ubiquitin-protein ligase HERC2 and UBE3A. May interact with MAPK6 and hence mediate MAPK6 interaction with UBE3A. Interaction with UBE3A may be indirect and mediated by HERC2.</text>
</comment>
<comment type="interaction">
    <interactant intactId="EBI-1053406">
        <id>Q96JN8</id>
    </interactant>
    <interactant intactId="EBI-1566217">
        <id>O43303</id>
        <label>CCP110</label>
    </interactant>
    <organismsDiffer>false</organismsDiffer>
    <experiments>9</experiments>
</comment>
<comment type="subcellular location">
    <subcellularLocation>
        <location evidence="5 6">Cytoplasm</location>
        <location evidence="5 6">Cytoskeleton</location>
        <location evidence="5 6">Microtubule organizing center</location>
        <location evidence="5 6">Centrosome</location>
        <location evidence="5 6">Centriole</location>
    </subcellularLocation>
    <text evidence="5 6">Localizes to procentriole and daughter centriole in growing and quiescent cells (PubMed:22441691). May loose association with centrosomes during mitosis (PubMed:22261722).</text>
</comment>
<comment type="alternative products">
    <event type="alternative splicing"/>
    <isoform>
        <id>Q96JN8-1</id>
        <name>1</name>
        <sequence type="displayed"/>
    </isoform>
    <isoform>
        <id>Q96JN8-2</id>
        <name>2</name>
        <sequence type="described" ref="VSP_027563"/>
    </isoform>
</comment>
<comment type="tissue specificity">
    <text evidence="3">Widely expressed at high levels (including brain).</text>
</comment>
<comment type="domain">
    <text evidence="5 6">The third NHR domain (NHR 3) is required for localization to both mother and daughter centrioles. NHR 1 restricts targeting to daughter centriole (PubMed:22441691). NHR 3 and 4 are required for CCP110/CEP97-binding, but not for HERC2-binding. NHR 5 and 6 are important for HERC2-binding and centrosomal localization (PubMed:22261722).</text>
</comment>
<comment type="PTM">
    <text evidence="5">Ubiquitinated; undergoes HERC2-dependent 'Lys-48' ubiquitination. This ubiquitination leads to proteasomal degradation.</text>
</comment>
<comment type="sequence caution" evidence="10">
    <conflict type="frameshift">
        <sequence resource="EMBL-CDS" id="AAH07227"/>
    </conflict>
</comment>
<comment type="sequence caution" evidence="10">
    <conflict type="erroneous initiation">
        <sequence resource="EMBL-CDS" id="BAB47416"/>
    </conflict>
    <text>Extended N-terminus.</text>
</comment>
<protein>
    <recommendedName>
        <fullName>Neuralized-like protein 4</fullName>
    </recommendedName>
</protein>
<dbReference type="EMBL" id="AB058690">
    <property type="protein sequence ID" value="BAB47416.1"/>
    <property type="status" value="ALT_INIT"/>
    <property type="molecule type" value="mRNA"/>
</dbReference>
<dbReference type="EMBL" id="AL136870">
    <property type="protein sequence ID" value="CAB66804.1"/>
    <property type="molecule type" value="mRNA"/>
</dbReference>
<dbReference type="EMBL" id="BC007227">
    <property type="protein sequence ID" value="AAH07227.1"/>
    <property type="status" value="ALT_FRAME"/>
    <property type="molecule type" value="mRNA"/>
</dbReference>
<dbReference type="EMBL" id="BC073134">
    <property type="protein sequence ID" value="AAH73134.1"/>
    <property type="molecule type" value="mRNA"/>
</dbReference>
<dbReference type="CCDS" id="CCDS42251.1">
    <molecule id="Q96JN8-1"/>
</dbReference>
<dbReference type="CCDS" id="CCDS42252.1">
    <molecule id="Q96JN8-2"/>
</dbReference>
<dbReference type="RefSeq" id="NP_001005408.1">
    <molecule id="Q96JN8-2"/>
    <property type="nucleotide sequence ID" value="NM_001005408.2"/>
</dbReference>
<dbReference type="RefSeq" id="NP_115818.2">
    <molecule id="Q96JN8-1"/>
    <property type="nucleotide sequence ID" value="NM_032442.3"/>
</dbReference>
<dbReference type="PDB" id="2E63">
    <property type="method" value="NMR"/>
    <property type="chains" value="A=43-205"/>
</dbReference>
<dbReference type="PDBsum" id="2E63"/>
<dbReference type="SMR" id="Q96JN8"/>
<dbReference type="BioGRID" id="124095">
    <property type="interactions" value="135"/>
</dbReference>
<dbReference type="CORUM" id="Q96JN8"/>
<dbReference type="FunCoup" id="Q96JN8">
    <property type="interactions" value="1546"/>
</dbReference>
<dbReference type="IntAct" id="Q96JN8">
    <property type="interactions" value="203"/>
</dbReference>
<dbReference type="MINT" id="Q96JN8"/>
<dbReference type="STRING" id="9606.ENSP00000382390"/>
<dbReference type="GlyGen" id="Q96JN8">
    <property type="glycosylation" value="2 sites, 1 O-linked glycan (1 site)"/>
</dbReference>
<dbReference type="iPTMnet" id="Q96JN8"/>
<dbReference type="PhosphoSitePlus" id="Q96JN8"/>
<dbReference type="BioMuta" id="NEURL4"/>
<dbReference type="DMDM" id="156630938"/>
<dbReference type="jPOST" id="Q96JN8"/>
<dbReference type="MassIVE" id="Q96JN8"/>
<dbReference type="PaxDb" id="9606-ENSP00000382390"/>
<dbReference type="PeptideAtlas" id="Q96JN8"/>
<dbReference type="ProteomicsDB" id="76995">
    <molecule id="Q96JN8-1"/>
</dbReference>
<dbReference type="ProteomicsDB" id="76996">
    <molecule id="Q96JN8-2"/>
</dbReference>
<dbReference type="Pumba" id="Q96JN8"/>
<dbReference type="Antibodypedia" id="48206">
    <property type="antibodies" value="11 antibodies from 7 providers"/>
</dbReference>
<dbReference type="DNASU" id="84461"/>
<dbReference type="Ensembl" id="ENST00000315614.11">
    <molecule id="Q96JN8-2"/>
    <property type="protein sequence ID" value="ENSP00000319826.7"/>
    <property type="gene ID" value="ENSG00000215041.10"/>
</dbReference>
<dbReference type="Ensembl" id="ENST00000399464.7">
    <molecule id="Q96JN8-1"/>
    <property type="protein sequence ID" value="ENSP00000382390.2"/>
    <property type="gene ID" value="ENSG00000215041.10"/>
</dbReference>
<dbReference type="Ensembl" id="ENST00000671847.1">
    <molecule id="Q96JN8-1"/>
    <property type="protein sequence ID" value="ENSP00000500916.1"/>
    <property type="gene ID" value="ENSG00000288301.1"/>
</dbReference>
<dbReference type="Ensembl" id="ENST00000673081.1">
    <molecule id="Q96JN8-2"/>
    <property type="protein sequence ID" value="ENSP00000500667.1"/>
    <property type="gene ID" value="ENSG00000288301.1"/>
</dbReference>
<dbReference type="GeneID" id="84461"/>
<dbReference type="KEGG" id="hsa:84461"/>
<dbReference type="MANE-Select" id="ENST00000399464.7">
    <property type="protein sequence ID" value="ENSP00000382390.2"/>
    <property type="RefSeq nucleotide sequence ID" value="NM_032442.3"/>
    <property type="RefSeq protein sequence ID" value="NP_115818.2"/>
</dbReference>
<dbReference type="UCSC" id="uc002gga.2">
    <molecule id="Q96JN8-1"/>
    <property type="organism name" value="human"/>
</dbReference>
<dbReference type="AGR" id="HGNC:34410"/>
<dbReference type="CTD" id="84461"/>
<dbReference type="DisGeNET" id="84461"/>
<dbReference type="GeneCards" id="NEURL4"/>
<dbReference type="HGNC" id="HGNC:34410">
    <property type="gene designation" value="NEURL4"/>
</dbReference>
<dbReference type="HPA" id="ENSG00000215041">
    <property type="expression patterns" value="Low tissue specificity"/>
</dbReference>
<dbReference type="MIM" id="615865">
    <property type="type" value="gene"/>
</dbReference>
<dbReference type="neXtProt" id="NX_Q96JN8"/>
<dbReference type="OpenTargets" id="ENSG00000215041"/>
<dbReference type="PharmGKB" id="PA164723835"/>
<dbReference type="VEuPathDB" id="HostDB:ENSG00000215041"/>
<dbReference type="eggNOG" id="KOG4625">
    <property type="taxonomic scope" value="Eukaryota"/>
</dbReference>
<dbReference type="GeneTree" id="ENSGT00940000159866"/>
<dbReference type="InParanoid" id="Q96JN8"/>
<dbReference type="OMA" id="VMTHRSL"/>
<dbReference type="OrthoDB" id="49113at2759"/>
<dbReference type="PAN-GO" id="Q96JN8">
    <property type="GO annotations" value="1 GO annotation based on evolutionary models"/>
</dbReference>
<dbReference type="PhylomeDB" id="Q96JN8"/>
<dbReference type="PathwayCommons" id="Q96JN8"/>
<dbReference type="SignaLink" id="Q96JN8"/>
<dbReference type="SIGNOR" id="Q96JN8"/>
<dbReference type="BioGRID-ORCS" id="84461">
    <property type="hits" value="18 hits in 1157 CRISPR screens"/>
</dbReference>
<dbReference type="CD-CODE" id="8C2F96ED">
    <property type="entry name" value="Centrosome"/>
</dbReference>
<dbReference type="EvolutionaryTrace" id="Q96JN8"/>
<dbReference type="GenomeRNAi" id="84461"/>
<dbReference type="Pharos" id="Q96JN8">
    <property type="development level" value="Tdark"/>
</dbReference>
<dbReference type="PRO" id="PR:Q96JN8"/>
<dbReference type="Proteomes" id="UP000005640">
    <property type="component" value="Chromosome 17"/>
</dbReference>
<dbReference type="RNAct" id="Q96JN8">
    <property type="molecule type" value="protein"/>
</dbReference>
<dbReference type="Bgee" id="ENSG00000215041">
    <property type="expression patterns" value="Expressed in right hemisphere of cerebellum and 97 other cell types or tissues"/>
</dbReference>
<dbReference type="ExpressionAtlas" id="Q96JN8">
    <property type="expression patterns" value="baseline and differential"/>
</dbReference>
<dbReference type="GO" id="GO:0005814">
    <property type="term" value="C:centriole"/>
    <property type="evidence" value="ECO:0007669"/>
    <property type="project" value="UniProtKB-SubCell"/>
</dbReference>
<dbReference type="GO" id="GO:0005739">
    <property type="term" value="C:mitochondrion"/>
    <property type="evidence" value="ECO:0007669"/>
    <property type="project" value="GOC"/>
</dbReference>
<dbReference type="GO" id="GO:0061630">
    <property type="term" value="F:ubiquitin protein ligase activity"/>
    <property type="evidence" value="ECO:0000318"/>
    <property type="project" value="GO_Central"/>
</dbReference>
<dbReference type="GO" id="GO:0043504">
    <property type="term" value="P:mitochondrial DNA repair"/>
    <property type="evidence" value="ECO:0007669"/>
    <property type="project" value="Ensembl"/>
</dbReference>
<dbReference type="GO" id="GO:0007283">
    <property type="term" value="P:spermatogenesis"/>
    <property type="evidence" value="ECO:0007669"/>
    <property type="project" value="Ensembl"/>
</dbReference>
<dbReference type="CDD" id="cd12887">
    <property type="entry name" value="SPRY_NHR_like"/>
    <property type="match status" value="6"/>
</dbReference>
<dbReference type="FunFam" id="2.60.120.920:FF:000001">
    <property type="entry name" value="neuralized-like protein 4 isoform X1"/>
    <property type="match status" value="4"/>
</dbReference>
<dbReference type="FunFam" id="2.60.120.920:FF:000014">
    <property type="entry name" value="neuralized-like protein 4 isoform X2"/>
    <property type="match status" value="1"/>
</dbReference>
<dbReference type="FunFam" id="2.60.120.920:FF:000016">
    <property type="entry name" value="neuralized-like protein 4 isoform X2"/>
    <property type="match status" value="1"/>
</dbReference>
<dbReference type="Gene3D" id="2.60.120.920">
    <property type="match status" value="6"/>
</dbReference>
<dbReference type="InterPro" id="IPR043136">
    <property type="entry name" value="B30.2/SPRY_sf"/>
</dbReference>
<dbReference type="InterPro" id="IPR013320">
    <property type="entry name" value="ConA-like_dom_sf"/>
</dbReference>
<dbReference type="InterPro" id="IPR037962">
    <property type="entry name" value="Neuralized"/>
</dbReference>
<dbReference type="InterPro" id="IPR006573">
    <property type="entry name" value="NHR_dom"/>
</dbReference>
<dbReference type="PANTHER" id="PTHR12429">
    <property type="entry name" value="NEURALIZED"/>
    <property type="match status" value="1"/>
</dbReference>
<dbReference type="PANTHER" id="PTHR12429:SF14">
    <property type="entry name" value="NEURALIZED-LIKE PROTEIN 4"/>
    <property type="match status" value="1"/>
</dbReference>
<dbReference type="Pfam" id="PF07177">
    <property type="entry name" value="Neuralized"/>
    <property type="match status" value="6"/>
</dbReference>
<dbReference type="SMART" id="SM00588">
    <property type="entry name" value="NEUZ"/>
    <property type="match status" value="6"/>
</dbReference>
<dbReference type="SUPFAM" id="SSF49899">
    <property type="entry name" value="Concanavalin A-like lectins/glucanases"/>
    <property type="match status" value="2"/>
</dbReference>
<dbReference type="PROSITE" id="PS51065">
    <property type="entry name" value="NHR"/>
    <property type="match status" value="6"/>
</dbReference>
<name>NEUL4_HUMAN</name>
<gene>
    <name type="primary">NEURL4</name>
    <name type="synonym">KIAA1787</name>
</gene>
<accession>Q96JN8</accession>
<accession>Q6GPI8</accession>
<accession>Q96IU9</accession>
<accession>Q9H0B0</accession>
<sequence length="1562" mass="166907">MAAGSGGSGGSGGGPGPGPGGGGGPSGSGSGPGSNGGLGSGGELHPRTGRLVSLSACGRTARRQQPGQEFNHGLVLSREPLRDGRVFTVRIDRKVNSWSGSIEIGVTALDPSVLDFPSSATGLKGGSWVVSGCSVLRDGRSVLEEYGQDLDQLGEGDRVGVERTVAGELRLWVNGRDCGVAATGLPPRVWAVVDLYGKCTQITVLPPEPGFSPPTPIPTPPLEPLAPTEDSALAEQGTSADEAFMVSPAQARPETFPNSLESHNDFANMELSEVVSNTILSAYNGGLLNVNLSSPPAGEGLGSSGAATSPILTSNDALLFHEKCGTLIKLSNNNKTAERRRPLDEFNNGVVMTNRPLRDNEMFEIRIDKLVDKWSGSIEIGVTTHNPNSLEYPATMTNLQSGTIMMSGCGILTNGKGTRREYCEFSLDELQEGDHIGLTRKSNSALHFFINGIDQGVATPLTPPVVYGVVDLYGMAVKVTIVHNNNHSDRLRRNNAILRALSPEGALRRAAPAAQAEPERLLFHPNCGQKAAITHEGRTALRPHATDDFNHGVVLSSRALRDGEVFQVRIDKMVDKWAGSIEIGVTTHNPAYLQLPSTMTNLRSGTWMMTGNGVMHNGTTILDEYGHNLDRLKAGDTVGVVRREDGTLHFFVNGMTQGPAAWNVPPGVYAVVDLYGQAAQATIVDDVEVAPVPEPLPEGNNQVSPSSPSSGAGGSDLRFHQLHGSNAVITNGGRTALRHNCRSEFNDAIVISNRALRDGELFEIVIQKMVDRWSGSIEAGVTAIRPEDLEFPNTMTDIDYDTWMLSGTAIMQDGNTMRNNYGCDLDALGTGARIGMMRTAKGDLHYFINGQDQGAACSGLPPGKEVYAVVDLYGQCVQVSITNATGPMDNSLATSNTATEKSFPLHSPVAGVAHRFHSTCGKNVTLEEDGTRAVRAAGYAHGLVFSTKELRAEEVFEVKVEELDEKWAGSLRLGLTTLAPGEMGPGAGGGGPGLPPSLPELRTKTTWMVSSCEVRRDGQLQRMNYGRNLERLGVGSRVGVRRGADDTMHILVDGEDMGPAATGIAKNVWAVLDLYGPVRGVSIVSSTRLEESEGTQPPSPSSDTGSEGEEDDEGEEHGLGGQNEVGIIPTTLEFLENHGKNILLSNGNRTATRVASYNQGIVVINQPLVPQLLVQVRIDFLNRQWTSSLVLGVITCAPERLNFPASACALKRAAWLLRGRGVFHNGLKICEKFGPNLDTCPEGTILGLRLDSSGGLHLHVNGVDQGVAVPDVPQPCHALVDLYGQCEQVTIVNPEPGAASGKSAGTQGDMEKADMVDGIKESVCWGPPPAASPLKSCEYHALCSRFQELLLLPEDYFMPPPKRSLCYCESCRKLRGDEAHRRRGEPPREYALPFGWCRFNLRVNPRLEAGTLTKKWHMAYHGSNVAAVRRVLDRGELGAGTASILSCRPLKGEPGVGFEEPGENCAPPREEQPPPVLLSPSLQYAGAETLASKVQFRDPKSQRTHQAQVAFQVCVRPGSYTPGPPSAALGEPPDPHFSPAELEWVTKEKGATLLCALLVRVE</sequence>
<keyword id="KW-0002">3D-structure</keyword>
<keyword id="KW-0025">Alternative splicing</keyword>
<keyword id="KW-0963">Cytoplasm</keyword>
<keyword id="KW-0206">Cytoskeleton</keyword>
<keyword id="KW-0597">Phosphoprotein</keyword>
<keyword id="KW-1267">Proteomics identification</keyword>
<keyword id="KW-1185">Reference proteome</keyword>
<keyword id="KW-0677">Repeat</keyword>
<keyword id="KW-0832">Ubl conjugation</keyword>
<keyword id="KW-0833">Ubl conjugation pathway</keyword>